<gene>
    <name evidence="1" type="primary">fabH2</name>
    <name type="ordered locus">SAV_1831</name>
</gene>
<organism>
    <name type="scientific">Streptomyces avermitilis (strain ATCC 31267 / DSM 46492 / JCM 5070 / NBRC 14893 / NCIMB 12804 / NRRL 8165 / MA-4680)</name>
    <dbReference type="NCBI Taxonomy" id="227882"/>
    <lineage>
        <taxon>Bacteria</taxon>
        <taxon>Bacillati</taxon>
        <taxon>Actinomycetota</taxon>
        <taxon>Actinomycetes</taxon>
        <taxon>Kitasatosporales</taxon>
        <taxon>Streptomycetaceae</taxon>
        <taxon>Streptomyces</taxon>
    </lineage>
</organism>
<proteinExistence type="inferred from homology"/>
<evidence type="ECO:0000255" key="1">
    <source>
        <dbReference type="HAMAP-Rule" id="MF_01815"/>
    </source>
</evidence>
<protein>
    <recommendedName>
        <fullName evidence="1">Beta-ketoacyl-[acyl-carrier-protein] synthase III 2</fullName>
        <shortName evidence="1">Beta-ketoacyl-ACP synthase III 2</shortName>
        <shortName evidence="1">KAS III 2</shortName>
        <ecNumber evidence="1">2.3.1.180</ecNumber>
    </recommendedName>
    <alternativeName>
        <fullName evidence="1">3-oxoacyl-[acyl-carrier-protein] synthase 3 2</fullName>
    </alternativeName>
    <alternativeName>
        <fullName evidence="1">3-oxoacyl-[acyl-carrier-protein] synthase III 2</fullName>
    </alternativeName>
</protein>
<feature type="chain" id="PRO_0000110482" description="Beta-ketoacyl-[acyl-carrier-protein] synthase III 2">
    <location>
        <begin position="1"/>
        <end position="315"/>
    </location>
</feature>
<feature type="region of interest" description="ACP-binding" evidence="1">
    <location>
        <begin position="242"/>
        <end position="246"/>
    </location>
</feature>
<feature type="active site" evidence="1">
    <location>
        <position position="113"/>
    </location>
</feature>
<feature type="active site" evidence="1">
    <location>
        <position position="241"/>
    </location>
</feature>
<feature type="active site" evidence="1">
    <location>
        <position position="271"/>
    </location>
</feature>
<sequence length="315" mass="32372">MNGSRIAAVGHYQPAKVLTNEDLASLVDTSDEWIRSRVGIRTRHFAGPDEPVDELAGHAAAKALASAGLAPADIDLVLVATSTAEDRSPNMAARVAARLGIPSPAAMDINVVCAGFTHALATADHAVRAGAATRALVIGADKMSAVTDWSDRTTCVLVGDGAGAAVVDACPEGAEPGIGPVLWGSVPEMGHAVRIEGTPPRFAQEGQSVYRWATTQLPAIARRACERAGLTPADLAGVVLHQANLRIIEPLAAKIGAVNAVVARDVVESGNTSAASIPLAFSKLVERGEISTGDPVLLFGFGGNLSYAGQVIRCP</sequence>
<comment type="function">
    <text evidence="1">Catalyzes the condensation reaction of fatty acid synthesis by the addition to an acyl acceptor of two carbons from malonyl-ACP. Catalyzes the first condensation reaction which initiates fatty acid synthesis and may therefore play a role in governing the total rate of fatty acid production. Possesses both acetoacetyl-ACP synthase and acetyl transacylase activities. Its substrate specificity determines the biosynthesis of branched-chain and/or straight-chain of fatty acids.</text>
</comment>
<comment type="catalytic activity">
    <reaction evidence="1">
        <text>malonyl-[ACP] + acetyl-CoA + H(+) = 3-oxobutanoyl-[ACP] + CO2 + CoA</text>
        <dbReference type="Rhea" id="RHEA:12080"/>
        <dbReference type="Rhea" id="RHEA-COMP:9623"/>
        <dbReference type="Rhea" id="RHEA-COMP:9625"/>
        <dbReference type="ChEBI" id="CHEBI:15378"/>
        <dbReference type="ChEBI" id="CHEBI:16526"/>
        <dbReference type="ChEBI" id="CHEBI:57287"/>
        <dbReference type="ChEBI" id="CHEBI:57288"/>
        <dbReference type="ChEBI" id="CHEBI:78449"/>
        <dbReference type="ChEBI" id="CHEBI:78450"/>
        <dbReference type="EC" id="2.3.1.180"/>
    </reaction>
</comment>
<comment type="pathway">
    <text evidence="1">Lipid metabolism; fatty acid biosynthesis.</text>
</comment>
<comment type="subunit">
    <text evidence="1">Homodimer.</text>
</comment>
<comment type="subcellular location">
    <subcellularLocation>
        <location evidence="1">Cytoplasm</location>
    </subcellularLocation>
</comment>
<comment type="domain">
    <text evidence="1">The last Arg residue of the ACP-binding site is essential for the weak association between ACP/AcpP and FabH.</text>
</comment>
<comment type="similarity">
    <text evidence="1">Belongs to the thiolase-like superfamily. FabH family.</text>
</comment>
<dbReference type="EC" id="2.3.1.180" evidence="1"/>
<dbReference type="EMBL" id="BA000030">
    <property type="protein sequence ID" value="BAC69542.1"/>
    <property type="molecule type" value="Genomic_DNA"/>
</dbReference>
<dbReference type="RefSeq" id="WP_010983270.1">
    <property type="nucleotide sequence ID" value="NZ_JZJK01000086.1"/>
</dbReference>
<dbReference type="SMR" id="Q82M29"/>
<dbReference type="GeneID" id="41538932"/>
<dbReference type="KEGG" id="sma:SAVERM_1831"/>
<dbReference type="eggNOG" id="COG0332">
    <property type="taxonomic scope" value="Bacteria"/>
</dbReference>
<dbReference type="HOGENOM" id="CLU_039592_4_0_11"/>
<dbReference type="OrthoDB" id="9815506at2"/>
<dbReference type="UniPathway" id="UPA00094"/>
<dbReference type="Proteomes" id="UP000000428">
    <property type="component" value="Chromosome"/>
</dbReference>
<dbReference type="GO" id="GO:0005737">
    <property type="term" value="C:cytoplasm"/>
    <property type="evidence" value="ECO:0007669"/>
    <property type="project" value="UniProtKB-SubCell"/>
</dbReference>
<dbReference type="GO" id="GO:0004315">
    <property type="term" value="F:3-oxoacyl-[acyl-carrier-protein] synthase activity"/>
    <property type="evidence" value="ECO:0007669"/>
    <property type="project" value="InterPro"/>
</dbReference>
<dbReference type="GO" id="GO:0033818">
    <property type="term" value="F:beta-ketoacyl-acyl-carrier-protein synthase III activity"/>
    <property type="evidence" value="ECO:0007669"/>
    <property type="project" value="UniProtKB-UniRule"/>
</dbReference>
<dbReference type="GO" id="GO:0006633">
    <property type="term" value="P:fatty acid biosynthetic process"/>
    <property type="evidence" value="ECO:0007669"/>
    <property type="project" value="UniProtKB-UniRule"/>
</dbReference>
<dbReference type="CDD" id="cd00830">
    <property type="entry name" value="KAS_III"/>
    <property type="match status" value="1"/>
</dbReference>
<dbReference type="Gene3D" id="3.40.47.10">
    <property type="match status" value="1"/>
</dbReference>
<dbReference type="HAMAP" id="MF_01815">
    <property type="entry name" value="FabH"/>
    <property type="match status" value="1"/>
</dbReference>
<dbReference type="InterPro" id="IPR013747">
    <property type="entry name" value="ACP_syn_III_C"/>
</dbReference>
<dbReference type="InterPro" id="IPR013751">
    <property type="entry name" value="ACP_syn_III_N"/>
</dbReference>
<dbReference type="InterPro" id="IPR004655">
    <property type="entry name" value="FabH"/>
</dbReference>
<dbReference type="InterPro" id="IPR016039">
    <property type="entry name" value="Thiolase-like"/>
</dbReference>
<dbReference type="NCBIfam" id="TIGR00747">
    <property type="entry name" value="fabH"/>
    <property type="match status" value="1"/>
</dbReference>
<dbReference type="NCBIfam" id="NF006829">
    <property type="entry name" value="PRK09352.1"/>
    <property type="match status" value="1"/>
</dbReference>
<dbReference type="PANTHER" id="PTHR43091">
    <property type="entry name" value="3-OXOACYL-[ACYL-CARRIER-PROTEIN] SYNTHASE"/>
    <property type="match status" value="1"/>
</dbReference>
<dbReference type="PANTHER" id="PTHR43091:SF1">
    <property type="entry name" value="BETA-KETOACYL-[ACYL-CARRIER-PROTEIN] SYNTHASE III, CHLOROPLASTIC"/>
    <property type="match status" value="1"/>
</dbReference>
<dbReference type="Pfam" id="PF08545">
    <property type="entry name" value="ACP_syn_III"/>
    <property type="match status" value="1"/>
</dbReference>
<dbReference type="Pfam" id="PF08541">
    <property type="entry name" value="ACP_syn_III_C"/>
    <property type="match status" value="1"/>
</dbReference>
<dbReference type="SUPFAM" id="SSF53901">
    <property type="entry name" value="Thiolase-like"/>
    <property type="match status" value="1"/>
</dbReference>
<name>FABH2_STRAW</name>
<keyword id="KW-0012">Acyltransferase</keyword>
<keyword id="KW-0963">Cytoplasm</keyword>
<keyword id="KW-0275">Fatty acid biosynthesis</keyword>
<keyword id="KW-0276">Fatty acid metabolism</keyword>
<keyword id="KW-0444">Lipid biosynthesis</keyword>
<keyword id="KW-0443">Lipid metabolism</keyword>
<keyword id="KW-0511">Multifunctional enzyme</keyword>
<keyword id="KW-1185">Reference proteome</keyword>
<keyword id="KW-0808">Transferase</keyword>
<accession>Q82M29</accession>
<reference key="1">
    <citation type="journal article" date="2001" name="Proc. Natl. Acad. Sci. U.S.A.">
        <title>Genome sequence of an industrial microorganism Streptomyces avermitilis: deducing the ability of producing secondary metabolites.</title>
        <authorList>
            <person name="Omura S."/>
            <person name="Ikeda H."/>
            <person name="Ishikawa J."/>
            <person name="Hanamoto A."/>
            <person name="Takahashi C."/>
            <person name="Shinose M."/>
            <person name="Takahashi Y."/>
            <person name="Horikawa H."/>
            <person name="Nakazawa H."/>
            <person name="Osonoe T."/>
            <person name="Kikuchi H."/>
            <person name="Shiba T."/>
            <person name="Sakaki Y."/>
            <person name="Hattori M."/>
        </authorList>
    </citation>
    <scope>NUCLEOTIDE SEQUENCE [LARGE SCALE GENOMIC DNA]</scope>
    <source>
        <strain>ATCC 31267 / DSM 46492 / JCM 5070 / NBRC 14893 / NCIMB 12804 / NRRL 8165 / MA-4680</strain>
    </source>
</reference>
<reference key="2">
    <citation type="journal article" date="2003" name="Nat. Biotechnol.">
        <title>Complete genome sequence and comparative analysis of the industrial microorganism Streptomyces avermitilis.</title>
        <authorList>
            <person name="Ikeda H."/>
            <person name="Ishikawa J."/>
            <person name="Hanamoto A."/>
            <person name="Shinose M."/>
            <person name="Kikuchi H."/>
            <person name="Shiba T."/>
            <person name="Sakaki Y."/>
            <person name="Hattori M."/>
            <person name="Omura S."/>
        </authorList>
    </citation>
    <scope>NUCLEOTIDE SEQUENCE [LARGE SCALE GENOMIC DNA]</scope>
    <source>
        <strain>ATCC 31267 / DSM 46492 / JCM 5070 / NBRC 14893 / NCIMB 12804 / NRRL 8165 / MA-4680</strain>
    </source>
</reference>